<protein>
    <recommendedName>
        <fullName>Alkyl hydroperoxide reductase C</fullName>
        <ecNumber evidence="1">1.11.1.26</ecNumber>
    </recommendedName>
    <alternativeName>
        <fullName>Peroxiredoxin</fullName>
    </alternativeName>
    <alternativeName>
        <fullName>Thioredoxin peroxidase</fullName>
    </alternativeName>
</protein>
<name>AHPC_BUCAI</name>
<comment type="function">
    <text evidence="1">Thiol-specific peroxidase that catalyzes the reduction of hydrogen peroxide and organic hydroperoxides to water and alcohols, respectively. Plays a role in cell protection against oxidative stress by detoxifying peroxides.</text>
</comment>
<comment type="catalytic activity">
    <reaction evidence="1">
        <text>a hydroperoxide + NADH + H(+) = an alcohol + NAD(+) + H2O</text>
        <dbReference type="Rhea" id="RHEA:62628"/>
        <dbReference type="ChEBI" id="CHEBI:15377"/>
        <dbReference type="ChEBI" id="CHEBI:15378"/>
        <dbReference type="ChEBI" id="CHEBI:30879"/>
        <dbReference type="ChEBI" id="CHEBI:35924"/>
        <dbReference type="ChEBI" id="CHEBI:57540"/>
        <dbReference type="ChEBI" id="CHEBI:57945"/>
        <dbReference type="EC" id="1.11.1.26"/>
    </reaction>
</comment>
<comment type="subunit">
    <text evidence="1">Homodimer; disulfide-linked, upon oxidation. 5 homodimers assemble to form a ring-like decamer.</text>
</comment>
<comment type="subcellular location">
    <subcellularLocation>
        <location evidence="2">Cytoplasm</location>
    </subcellularLocation>
</comment>
<comment type="miscellaneous">
    <text evidence="3">The active site is a conserved redox-active cysteine residue, the peroxidatic cysteine (C(P)), which makes the nucleophilic attack on the peroxide substrate. The peroxide oxidizes the C(P)-SH to cysteine sulfenic acid (C(P)-SOH), which then reacts with another cysteine residue, the resolving cysteine (C(R)), to form a disulfide bridge. The disulfide is subsequently reduced by an appropriate electron donor to complete the catalytic cycle. In this typical 2-Cys peroxiredoxin, C(R) is provided by the other dimeric subunit to form an intersubunit disulfide. The disulfide is subsequently reduced by thioredoxin.</text>
</comment>
<comment type="similarity">
    <text evidence="5">Belongs to the peroxiredoxin family. AhpC/Prx1 subfamily.</text>
</comment>
<sequence>MVLVTQNAPNFIAPAILKNNQIVEQFDLKKYSNGQSTVLFFWPMDFTFVCPSEIIEFNKLHSEFKKRNVKIVGVSIDSVYVHQAWQNTLPKNGGIGKINFPMVSDVKHDIQKSYGIQHPNLGIALRASFLIDSNWIIRHQVVNDLPFGRNITDMIRMVDALDFHNKFGEVCPANWKKGEEGITASSEGVSQYLSKYS</sequence>
<evidence type="ECO:0000250" key="1">
    <source>
        <dbReference type="UniProtKB" id="P0A251"/>
    </source>
</evidence>
<evidence type="ECO:0000250" key="2">
    <source>
        <dbReference type="UniProtKB" id="P0AE08"/>
    </source>
</evidence>
<evidence type="ECO:0000250" key="3">
    <source>
        <dbReference type="UniProtKB" id="P56876"/>
    </source>
</evidence>
<evidence type="ECO:0000255" key="4">
    <source>
        <dbReference type="PROSITE-ProRule" id="PRU00691"/>
    </source>
</evidence>
<evidence type="ECO:0000305" key="5"/>
<organism>
    <name type="scientific">Buchnera aphidicola subsp. Acyrthosiphon pisum (strain APS)</name>
    <name type="common">Acyrthosiphon pisum symbiotic bacterium</name>
    <dbReference type="NCBI Taxonomy" id="107806"/>
    <lineage>
        <taxon>Bacteria</taxon>
        <taxon>Pseudomonadati</taxon>
        <taxon>Pseudomonadota</taxon>
        <taxon>Gammaproteobacteria</taxon>
        <taxon>Enterobacterales</taxon>
        <taxon>Erwiniaceae</taxon>
        <taxon>Buchnera</taxon>
    </lineage>
</organism>
<proteinExistence type="inferred from homology"/>
<accession>P57279</accession>
<gene>
    <name type="ordered locus">BU182</name>
</gene>
<keyword id="KW-0049">Antioxidant</keyword>
<keyword id="KW-0963">Cytoplasm</keyword>
<keyword id="KW-1015">Disulfide bond</keyword>
<keyword id="KW-0560">Oxidoreductase</keyword>
<keyword id="KW-0575">Peroxidase</keyword>
<keyword id="KW-0676">Redox-active center</keyword>
<keyword id="KW-1185">Reference proteome</keyword>
<reference key="1">
    <citation type="journal article" date="2000" name="Nature">
        <title>Genome sequence of the endocellular bacterial symbiont of aphids Buchnera sp. APS.</title>
        <authorList>
            <person name="Shigenobu S."/>
            <person name="Watanabe H."/>
            <person name="Hattori M."/>
            <person name="Sakaki Y."/>
            <person name="Ishikawa H."/>
        </authorList>
    </citation>
    <scope>NUCLEOTIDE SEQUENCE [LARGE SCALE GENOMIC DNA]</scope>
    <source>
        <strain>APS</strain>
    </source>
</reference>
<dbReference type="EC" id="1.11.1.26" evidence="1"/>
<dbReference type="EMBL" id="BA000003">
    <property type="protein sequence ID" value="BAB12899.1"/>
    <property type="molecule type" value="Genomic_DNA"/>
</dbReference>
<dbReference type="RefSeq" id="NP_240013.1">
    <property type="nucleotide sequence ID" value="NC_002528.1"/>
</dbReference>
<dbReference type="RefSeq" id="WP_009874139.1">
    <property type="nucleotide sequence ID" value="NZ_AP036055.1"/>
</dbReference>
<dbReference type="SMR" id="P57279"/>
<dbReference type="STRING" id="563178.BUAP5A_179"/>
<dbReference type="EnsemblBacteria" id="BAB12899">
    <property type="protein sequence ID" value="BAB12899"/>
    <property type="gene ID" value="BAB12899"/>
</dbReference>
<dbReference type="KEGG" id="buc:BU182"/>
<dbReference type="PATRIC" id="fig|107806.10.peg.193"/>
<dbReference type="eggNOG" id="COG0450">
    <property type="taxonomic scope" value="Bacteria"/>
</dbReference>
<dbReference type="HOGENOM" id="CLU_042529_21_1_6"/>
<dbReference type="BioCyc" id="BAPH107806:GBZJ-180-MONOMER"/>
<dbReference type="Proteomes" id="UP000001806">
    <property type="component" value="Chromosome"/>
</dbReference>
<dbReference type="GO" id="GO:0005829">
    <property type="term" value="C:cytosol"/>
    <property type="evidence" value="ECO:0007669"/>
    <property type="project" value="TreeGrafter"/>
</dbReference>
<dbReference type="GO" id="GO:0102039">
    <property type="term" value="F:NADH-dependent peroxiredoxin activity"/>
    <property type="evidence" value="ECO:0007669"/>
    <property type="project" value="UniProtKB-EC"/>
</dbReference>
<dbReference type="GO" id="GO:0008379">
    <property type="term" value="F:thioredoxin peroxidase activity"/>
    <property type="evidence" value="ECO:0007669"/>
    <property type="project" value="TreeGrafter"/>
</dbReference>
<dbReference type="GO" id="GO:0045454">
    <property type="term" value="P:cell redox homeostasis"/>
    <property type="evidence" value="ECO:0007669"/>
    <property type="project" value="TreeGrafter"/>
</dbReference>
<dbReference type="GO" id="GO:0033554">
    <property type="term" value="P:cellular response to stress"/>
    <property type="evidence" value="ECO:0007669"/>
    <property type="project" value="TreeGrafter"/>
</dbReference>
<dbReference type="GO" id="GO:0042744">
    <property type="term" value="P:hydrogen peroxide catabolic process"/>
    <property type="evidence" value="ECO:0007669"/>
    <property type="project" value="TreeGrafter"/>
</dbReference>
<dbReference type="GO" id="GO:0006979">
    <property type="term" value="P:response to oxidative stress"/>
    <property type="evidence" value="ECO:0007669"/>
    <property type="project" value="TreeGrafter"/>
</dbReference>
<dbReference type="CDD" id="cd03015">
    <property type="entry name" value="PRX_Typ2cys"/>
    <property type="match status" value="1"/>
</dbReference>
<dbReference type="FunFam" id="3.40.30.10:FF:000002">
    <property type="entry name" value="Alkyl hydroperoxide reductase C"/>
    <property type="match status" value="1"/>
</dbReference>
<dbReference type="Gene3D" id="3.40.30.10">
    <property type="entry name" value="Glutaredoxin"/>
    <property type="match status" value="1"/>
</dbReference>
<dbReference type="InterPro" id="IPR000866">
    <property type="entry name" value="AhpC/TSA"/>
</dbReference>
<dbReference type="InterPro" id="IPR050217">
    <property type="entry name" value="Peroxiredoxin"/>
</dbReference>
<dbReference type="InterPro" id="IPR024706">
    <property type="entry name" value="Peroxiredoxin_AhpC-typ"/>
</dbReference>
<dbReference type="InterPro" id="IPR019479">
    <property type="entry name" value="Peroxiredoxin_C"/>
</dbReference>
<dbReference type="InterPro" id="IPR036249">
    <property type="entry name" value="Thioredoxin-like_sf"/>
</dbReference>
<dbReference type="InterPro" id="IPR013766">
    <property type="entry name" value="Thioredoxin_domain"/>
</dbReference>
<dbReference type="NCBIfam" id="NF011576">
    <property type="entry name" value="PRK15000.1"/>
    <property type="match status" value="1"/>
</dbReference>
<dbReference type="PANTHER" id="PTHR10681">
    <property type="entry name" value="THIOREDOXIN PEROXIDASE"/>
    <property type="match status" value="1"/>
</dbReference>
<dbReference type="PANTHER" id="PTHR10681:SF128">
    <property type="entry name" value="THIOREDOXIN-DEPENDENT PEROXIDE REDUCTASE, MITOCHONDRIAL"/>
    <property type="match status" value="1"/>
</dbReference>
<dbReference type="Pfam" id="PF10417">
    <property type="entry name" value="1-cysPrx_C"/>
    <property type="match status" value="1"/>
</dbReference>
<dbReference type="Pfam" id="PF00578">
    <property type="entry name" value="AhpC-TSA"/>
    <property type="match status" value="1"/>
</dbReference>
<dbReference type="PIRSF" id="PIRSF000239">
    <property type="entry name" value="AHPC"/>
    <property type="match status" value="1"/>
</dbReference>
<dbReference type="SUPFAM" id="SSF52833">
    <property type="entry name" value="Thioredoxin-like"/>
    <property type="match status" value="1"/>
</dbReference>
<dbReference type="PROSITE" id="PS51352">
    <property type="entry name" value="THIOREDOXIN_2"/>
    <property type="match status" value="1"/>
</dbReference>
<feature type="chain" id="PRO_0000135141" description="Alkyl hydroperoxide reductase C">
    <location>
        <begin position="1"/>
        <end position="197"/>
    </location>
</feature>
<feature type="domain" description="Thioredoxin" evidence="4">
    <location>
        <begin position="2"/>
        <end position="163"/>
    </location>
</feature>
<feature type="active site" description="Cysteine sulfenic acid (-SOH) intermediate" evidence="1">
    <location>
        <position position="50"/>
    </location>
</feature>
<feature type="disulfide bond" description="Interchain (with C-171); in linked form" evidence="1">
    <location>
        <position position="50"/>
    </location>
</feature>
<feature type="disulfide bond" description="Interchain (with C-50); in linked form" evidence="1">
    <location>
        <position position="171"/>
    </location>
</feature>